<sequence length="255" mass="27972">MSKVKTLILRTPGTNCDIETSYAFELAGSETEMVHINELLAKPSRLAEFQIMAFPGGFGYGDDLGAGRVLANEVRLKLGEKINRFHESGGLIIGICNGFQALVKTGILPGPMKDGQKITLTENNSGRFECRWTYLAVNPFSTCVFTQGIDRLYLPVAHGEGKLLGSPEVINKLNSVVYYTDKDGKRNSPYPANPAGTLMDIAGIADESGRIFALMPHPERFVRGSQHPRWPAEGLKEEGDGLKIFTNAVKWARQV</sequence>
<feature type="chain" id="PRO_0000252704" description="Phosphoribosylformylglycinamidine synthase subunit PurQ">
    <location>
        <begin position="1"/>
        <end position="255"/>
    </location>
</feature>
<feature type="domain" description="Glutamine amidotransferase type-1" evidence="1">
    <location>
        <begin position="6"/>
        <end position="255"/>
    </location>
</feature>
<feature type="active site" description="Nucleophile" evidence="1">
    <location>
        <position position="96"/>
    </location>
</feature>
<feature type="active site" evidence="1">
    <location>
        <position position="217"/>
    </location>
</feature>
<feature type="active site" evidence="1">
    <location>
        <position position="219"/>
    </location>
</feature>
<protein>
    <recommendedName>
        <fullName evidence="1">Phosphoribosylformylglycinamidine synthase subunit PurQ</fullName>
        <shortName evidence="1">FGAM synthase</shortName>
        <ecNumber evidence="1">6.3.5.3</ecNumber>
    </recommendedName>
    <alternativeName>
        <fullName evidence="1">Formylglycinamide ribonucleotide amidotransferase subunit I</fullName>
        <shortName evidence="1">FGAR amidotransferase I</shortName>
        <shortName evidence="1">FGAR-AT I</shortName>
    </alternativeName>
    <alternativeName>
        <fullName evidence="1">Glutaminase PurQ</fullName>
        <ecNumber evidence="1">3.5.1.2</ecNumber>
    </alternativeName>
    <alternativeName>
        <fullName evidence="1">Phosphoribosylformylglycinamidine synthase subunit I</fullName>
    </alternativeName>
</protein>
<dbReference type="EC" id="6.3.5.3" evidence="1"/>
<dbReference type="EC" id="3.5.1.2" evidence="1"/>
<dbReference type="EMBL" id="CP000027">
    <property type="protein sequence ID" value="AAW40336.1"/>
    <property type="molecule type" value="Genomic_DNA"/>
</dbReference>
<dbReference type="RefSeq" id="WP_010936157.1">
    <property type="nucleotide sequence ID" value="NC_002936.3"/>
</dbReference>
<dbReference type="SMR" id="Q3Z9H5"/>
<dbReference type="FunCoup" id="Q3Z9H5">
    <property type="interactions" value="118"/>
</dbReference>
<dbReference type="STRING" id="243164.DET0378"/>
<dbReference type="GeneID" id="3230300"/>
<dbReference type="KEGG" id="det:DET0378"/>
<dbReference type="PATRIC" id="fig|243164.10.peg.358"/>
<dbReference type="eggNOG" id="COG0047">
    <property type="taxonomic scope" value="Bacteria"/>
</dbReference>
<dbReference type="HOGENOM" id="CLU_001031_3_0_0"/>
<dbReference type="InParanoid" id="Q3Z9H5"/>
<dbReference type="UniPathway" id="UPA00074">
    <property type="reaction ID" value="UER00128"/>
</dbReference>
<dbReference type="Proteomes" id="UP000008289">
    <property type="component" value="Chromosome"/>
</dbReference>
<dbReference type="GO" id="GO:0005737">
    <property type="term" value="C:cytoplasm"/>
    <property type="evidence" value="ECO:0007669"/>
    <property type="project" value="UniProtKB-SubCell"/>
</dbReference>
<dbReference type="GO" id="GO:0005524">
    <property type="term" value="F:ATP binding"/>
    <property type="evidence" value="ECO:0007669"/>
    <property type="project" value="UniProtKB-KW"/>
</dbReference>
<dbReference type="GO" id="GO:0004359">
    <property type="term" value="F:glutaminase activity"/>
    <property type="evidence" value="ECO:0007669"/>
    <property type="project" value="UniProtKB-EC"/>
</dbReference>
<dbReference type="GO" id="GO:0004642">
    <property type="term" value="F:phosphoribosylformylglycinamidine synthase activity"/>
    <property type="evidence" value="ECO:0007669"/>
    <property type="project" value="UniProtKB-UniRule"/>
</dbReference>
<dbReference type="GO" id="GO:0006189">
    <property type="term" value="P:'de novo' IMP biosynthetic process"/>
    <property type="evidence" value="ECO:0007669"/>
    <property type="project" value="UniProtKB-UniRule"/>
</dbReference>
<dbReference type="CDD" id="cd01740">
    <property type="entry name" value="GATase1_FGAR_AT"/>
    <property type="match status" value="1"/>
</dbReference>
<dbReference type="Gene3D" id="3.40.50.880">
    <property type="match status" value="1"/>
</dbReference>
<dbReference type="HAMAP" id="MF_00421">
    <property type="entry name" value="PurQ"/>
    <property type="match status" value="1"/>
</dbReference>
<dbReference type="InterPro" id="IPR029062">
    <property type="entry name" value="Class_I_gatase-like"/>
</dbReference>
<dbReference type="InterPro" id="IPR010075">
    <property type="entry name" value="PRibForGlyAmidine_synth_PurQ"/>
</dbReference>
<dbReference type="NCBIfam" id="TIGR01737">
    <property type="entry name" value="FGAM_synth_I"/>
    <property type="match status" value="1"/>
</dbReference>
<dbReference type="PANTHER" id="PTHR10099">
    <property type="entry name" value="PHOSPHORIBOSYLFORMYLGLYCINAMIDINE SYNTHASE"/>
    <property type="match status" value="1"/>
</dbReference>
<dbReference type="PANTHER" id="PTHR10099:SF1">
    <property type="entry name" value="PHOSPHORIBOSYLFORMYLGLYCINAMIDINE SYNTHASE"/>
    <property type="match status" value="1"/>
</dbReference>
<dbReference type="Pfam" id="PF13507">
    <property type="entry name" value="GATase_5"/>
    <property type="match status" value="1"/>
</dbReference>
<dbReference type="PIRSF" id="PIRSF001586">
    <property type="entry name" value="FGAM_synth_I"/>
    <property type="match status" value="1"/>
</dbReference>
<dbReference type="SMART" id="SM01211">
    <property type="entry name" value="GATase_5"/>
    <property type="match status" value="1"/>
</dbReference>
<dbReference type="SUPFAM" id="SSF52317">
    <property type="entry name" value="Class I glutamine amidotransferase-like"/>
    <property type="match status" value="1"/>
</dbReference>
<dbReference type="PROSITE" id="PS51273">
    <property type="entry name" value="GATASE_TYPE_1"/>
    <property type="match status" value="1"/>
</dbReference>
<comment type="function">
    <text evidence="1">Part of the phosphoribosylformylglycinamidine synthase complex involved in the purines biosynthetic pathway. Catalyzes the ATP-dependent conversion of formylglycinamide ribonucleotide (FGAR) and glutamine to yield formylglycinamidine ribonucleotide (FGAM) and glutamate. The FGAM synthase complex is composed of three subunits. PurQ produces an ammonia molecule by converting glutamine to glutamate. PurL transfers the ammonia molecule to FGAR to form FGAM in an ATP-dependent manner. PurS interacts with PurQ and PurL and is thought to assist in the transfer of the ammonia molecule from PurQ to PurL.</text>
</comment>
<comment type="catalytic activity">
    <reaction evidence="1">
        <text>N(2)-formyl-N(1)-(5-phospho-beta-D-ribosyl)glycinamide + L-glutamine + ATP + H2O = 2-formamido-N(1)-(5-O-phospho-beta-D-ribosyl)acetamidine + L-glutamate + ADP + phosphate + H(+)</text>
        <dbReference type="Rhea" id="RHEA:17129"/>
        <dbReference type="ChEBI" id="CHEBI:15377"/>
        <dbReference type="ChEBI" id="CHEBI:15378"/>
        <dbReference type="ChEBI" id="CHEBI:29985"/>
        <dbReference type="ChEBI" id="CHEBI:30616"/>
        <dbReference type="ChEBI" id="CHEBI:43474"/>
        <dbReference type="ChEBI" id="CHEBI:58359"/>
        <dbReference type="ChEBI" id="CHEBI:147286"/>
        <dbReference type="ChEBI" id="CHEBI:147287"/>
        <dbReference type="ChEBI" id="CHEBI:456216"/>
        <dbReference type="EC" id="6.3.5.3"/>
    </reaction>
</comment>
<comment type="catalytic activity">
    <reaction evidence="1">
        <text>L-glutamine + H2O = L-glutamate + NH4(+)</text>
        <dbReference type="Rhea" id="RHEA:15889"/>
        <dbReference type="ChEBI" id="CHEBI:15377"/>
        <dbReference type="ChEBI" id="CHEBI:28938"/>
        <dbReference type="ChEBI" id="CHEBI:29985"/>
        <dbReference type="ChEBI" id="CHEBI:58359"/>
        <dbReference type="EC" id="3.5.1.2"/>
    </reaction>
</comment>
<comment type="pathway">
    <text evidence="1">Purine metabolism; IMP biosynthesis via de novo pathway; 5-amino-1-(5-phospho-D-ribosyl)imidazole from N(2)-formyl-N(1)-(5-phospho-D-ribosyl)glycinamide: step 1/2.</text>
</comment>
<comment type="subunit">
    <text evidence="1">Part of the FGAM synthase complex composed of 1 PurL, 1 PurQ and 2 PurS subunits.</text>
</comment>
<comment type="subcellular location">
    <subcellularLocation>
        <location evidence="1">Cytoplasm</location>
    </subcellularLocation>
</comment>
<organism>
    <name type="scientific">Dehalococcoides mccartyi (strain ATCC BAA-2266 / KCTC 15142 / 195)</name>
    <name type="common">Dehalococcoides ethenogenes (strain 195)</name>
    <dbReference type="NCBI Taxonomy" id="243164"/>
    <lineage>
        <taxon>Bacteria</taxon>
        <taxon>Bacillati</taxon>
        <taxon>Chloroflexota</taxon>
        <taxon>Dehalococcoidia</taxon>
        <taxon>Dehalococcoidales</taxon>
        <taxon>Dehalococcoidaceae</taxon>
        <taxon>Dehalococcoides</taxon>
    </lineage>
</organism>
<keyword id="KW-0067">ATP-binding</keyword>
<keyword id="KW-0963">Cytoplasm</keyword>
<keyword id="KW-0315">Glutamine amidotransferase</keyword>
<keyword id="KW-0378">Hydrolase</keyword>
<keyword id="KW-0436">Ligase</keyword>
<keyword id="KW-0547">Nucleotide-binding</keyword>
<keyword id="KW-0658">Purine biosynthesis</keyword>
<name>PURQ_DEHM1</name>
<proteinExistence type="inferred from homology"/>
<gene>
    <name evidence="1" type="primary">purQ</name>
    <name type="ordered locus">DET0378</name>
</gene>
<reference key="1">
    <citation type="journal article" date="2005" name="Science">
        <title>Genome sequence of the PCE-dechlorinating bacterium Dehalococcoides ethenogenes.</title>
        <authorList>
            <person name="Seshadri R."/>
            <person name="Adrian L."/>
            <person name="Fouts D.E."/>
            <person name="Eisen J.A."/>
            <person name="Phillippy A.M."/>
            <person name="Methe B.A."/>
            <person name="Ward N.L."/>
            <person name="Nelson W.C."/>
            <person name="DeBoy R.T."/>
            <person name="Khouri H.M."/>
            <person name="Kolonay J.F."/>
            <person name="Dodson R.J."/>
            <person name="Daugherty S.C."/>
            <person name="Brinkac L.M."/>
            <person name="Sullivan S.A."/>
            <person name="Madupu R."/>
            <person name="Nelson K.E."/>
            <person name="Kang K.H."/>
            <person name="Impraim M."/>
            <person name="Tran K."/>
            <person name="Robinson J.M."/>
            <person name="Forberger H.A."/>
            <person name="Fraser C.M."/>
            <person name="Zinder S.H."/>
            <person name="Heidelberg J.F."/>
        </authorList>
    </citation>
    <scope>NUCLEOTIDE SEQUENCE [LARGE SCALE GENOMIC DNA]</scope>
    <source>
        <strain>ATCC BAA-2266 / KCTC 15142 / 195</strain>
    </source>
</reference>
<evidence type="ECO:0000255" key="1">
    <source>
        <dbReference type="HAMAP-Rule" id="MF_00421"/>
    </source>
</evidence>
<accession>Q3Z9H5</accession>